<name>FPR2_HUMAN</name>
<sequence length="351" mass="38964">METNFSTPLNEYEEVSYESAGYTVLRILPLVVLGVTFVLGVLGNGLVIWVAGFRMTRTVTTICYLNLALADFSFTATLPFLIVSMAMGEKWPFGWFLCKLIHIVVDINLFGSVFLIGFIALDRCICVLHPVWAQNHRTVSLAMKVIVGPWILALVLTLPVFLFLTTVTIPNGDTYCTFNFASWGGTPEERLKVAITMLTARGIIRFVIGFSLPMSIVAICYGLIAAKIHKKGMIKSSRPLRVLTAVVASFFICWFPFQLVALLGTVWLKEMLFYGKYKIIDILVNPTSSLAFFNSCLNPMLYVFVGQDFRERLIHSLPTSLERALSEDSAPTNDTAANSASPPAETELQAM</sequence>
<gene>
    <name type="primary">FPR2</name>
    <name type="synonym">FPRH1</name>
    <name type="synonym">FPRL1</name>
    <name type="synonym">LXA4R</name>
</gene>
<keyword id="KW-0002">3D-structure</keyword>
<keyword id="KW-1003">Cell membrane</keyword>
<keyword id="KW-0145">Chemotaxis</keyword>
<keyword id="KW-1015">Disulfide bond</keyword>
<keyword id="KW-0297">G-protein coupled receptor</keyword>
<keyword id="KW-0325">Glycoprotein</keyword>
<keyword id="KW-0472">Membrane</keyword>
<keyword id="KW-1267">Proteomics identification</keyword>
<keyword id="KW-0675">Receptor</keyword>
<keyword id="KW-1185">Reference proteome</keyword>
<keyword id="KW-0807">Transducer</keyword>
<keyword id="KW-0812">Transmembrane</keyword>
<keyword id="KW-1133">Transmembrane helix</keyword>
<protein>
    <recommendedName>
        <fullName>N-formyl peptide receptor 2</fullName>
    </recommendedName>
    <alternativeName>
        <fullName>FMLP-related receptor I</fullName>
        <shortName>FMLP-R-I</shortName>
    </alternativeName>
    <alternativeName>
        <fullName>Formyl peptide receptor-like 1</fullName>
    </alternativeName>
    <alternativeName>
        <fullName>HM63</fullName>
    </alternativeName>
    <alternativeName>
        <fullName>Lipoxin A4 receptor</fullName>
        <shortName>LXA4 receptor</shortName>
    </alternativeName>
    <alternativeName>
        <fullName>RFP</fullName>
    </alternativeName>
</protein>
<comment type="function">
    <text evidence="1 6 7 10">Low affinity receptor for N-formyl-methionyl peptides, which are powerful neutrophil chemotactic factors (PubMed:1374236). Binding of FMLP to the receptor causes activation of neutrophils (PubMed:1374236). This response is mediated via a G-protein that activates a phosphatidylinositol-calcium second messenger system (PubMed:1374236). The activation of LXA4R could result in an anti-inflammatory outcome counteracting the actions of pro-inflammatory signals such as LTB4 (leukotriene B4) (PubMed:9547339). Receptor for the chemokine-like protein FAM19A5, mediating FAM19A5-stimulated macrophage chemotaxis and the inhibitory effect on TNFSF11/RANKL-induced osteoclast differentiation (By similarity). Acts as a receptor for humanin (PubMed:15465011).</text>
</comment>
<comment type="subunit">
    <text evidence="5">Interacts with Amyloid-beta protein 42, product of APP; the interaction takes place at the cell surface and the complex is then rapidly internalized.</text>
</comment>
<comment type="subunit">
    <text evidence="8">(Microbial infection) Interacts with Staphylococcus aureus protein SSL13; this interaction leads to the activation of neutrophils.</text>
</comment>
<comment type="interaction">
    <interactant intactId="EBI-17291771">
        <id>P25090</id>
    </interactant>
    <interactant intactId="EBI-715495">
        <id>P05090</id>
        <label>APOD</label>
    </interactant>
    <organismsDiffer>false</organismsDiffer>
    <experiments>3</experiments>
</comment>
<comment type="interaction">
    <interactant intactId="EBI-17291771">
        <id>P25090</id>
    </interactant>
    <interactant intactId="EBI-77613">
        <id>P05067</id>
        <label>APP</label>
    </interactant>
    <organismsDiffer>false</organismsDiffer>
    <experiments>3</experiments>
</comment>
<comment type="interaction">
    <interactant intactId="EBI-17291771">
        <id>P25090</id>
    </interactant>
    <interactant intactId="EBI-713304">
        <id>Q9H0Q3</id>
        <label>FXYD6</label>
    </interactant>
    <organismsDiffer>false</organismsDiffer>
    <experiments>3</experiments>
</comment>
<comment type="interaction">
    <interactant intactId="EBI-17291771">
        <id>P25090</id>
    </interactant>
    <interactant intactId="EBI-11304917">
        <id>Q8N386</id>
        <label>LRRC25</label>
    </interactant>
    <organismsDiffer>false</organismsDiffer>
    <experiments>3</experiments>
</comment>
<comment type="interaction">
    <interactant intactId="EBI-17291771">
        <id>P25090</id>
    </interactant>
    <interactant intactId="EBI-17280858">
        <id>Q8WWF3</id>
        <label>SSMEM1</label>
    </interactant>
    <organismsDiffer>false</organismsDiffer>
    <experiments>3</experiments>
</comment>
<comment type="subcellular location">
    <subcellularLocation>
        <location evidence="5 7">Cell membrane</location>
        <topology>Multi-pass membrane protein</topology>
    </subcellularLocation>
    <text evidence="5 7">Associates with Amyloid-beta protein 42, product of APP, at the cell surface and the complex is then rapidly internalized (PubMed:11689470). Also internalized in the presence of humanin (PubMed:15465011).</text>
</comment>
<comment type="tissue specificity">
    <text evidence="7 9">Detected in lung, bone marrow, neutrophils, spleen and testis.</text>
</comment>
<comment type="similarity">
    <text evidence="3">Belongs to the G-protein coupled receptor 1 family.</text>
</comment>
<accession>P25090</accession>
<accession>A8K3E2</accession>
<proteinExistence type="evidence at protein level"/>
<dbReference type="EMBL" id="M76672">
    <property type="protein sequence ID" value="AAA58481.1"/>
    <property type="molecule type" value="mRNA"/>
</dbReference>
<dbReference type="EMBL" id="X63819">
    <property type="protein sequence ID" value="CAA45319.1"/>
    <property type="molecule type" value="mRNA"/>
</dbReference>
<dbReference type="EMBL" id="M88107">
    <property type="protein sequence ID" value="AAA60070.1"/>
    <property type="molecule type" value="mRNA"/>
</dbReference>
<dbReference type="EMBL" id="M84562">
    <property type="protein sequence ID" value="AAA52473.1"/>
    <property type="molecule type" value="mRNA"/>
</dbReference>
<dbReference type="EMBL" id="D10922">
    <property type="protein sequence ID" value="BAA01720.1"/>
    <property type="molecule type" value="mRNA"/>
</dbReference>
<dbReference type="EMBL" id="U81501">
    <property type="protein sequence ID" value="AAB51133.1"/>
    <property type="molecule type" value="mRNA"/>
</dbReference>
<dbReference type="EMBL" id="AF054013">
    <property type="protein sequence ID" value="AAC13684.1"/>
    <property type="molecule type" value="mRNA"/>
</dbReference>
<dbReference type="EMBL" id="AY225226">
    <property type="protein sequence ID" value="AAO67711.1"/>
    <property type="molecule type" value="Genomic_DNA"/>
</dbReference>
<dbReference type="EMBL" id="AK290557">
    <property type="protein sequence ID" value="BAF83246.1"/>
    <property type="molecule type" value="mRNA"/>
</dbReference>
<dbReference type="EMBL" id="AC018755">
    <property type="protein sequence ID" value="AAF87844.1"/>
    <property type="molecule type" value="Genomic_DNA"/>
</dbReference>
<dbReference type="EMBL" id="CH471135">
    <property type="protein sequence ID" value="EAW72043.1"/>
    <property type="molecule type" value="Genomic_DNA"/>
</dbReference>
<dbReference type="EMBL" id="BC029125">
    <property type="protein sequence ID" value="AAH29125.1"/>
    <property type="molecule type" value="mRNA"/>
</dbReference>
<dbReference type="EMBL" id="BC071722">
    <property type="protein sequence ID" value="AAH71722.1"/>
    <property type="molecule type" value="mRNA"/>
</dbReference>
<dbReference type="CCDS" id="CCDS12840.1"/>
<dbReference type="PIR" id="B42009">
    <property type="entry name" value="B42009"/>
</dbReference>
<dbReference type="RefSeq" id="NP_001005738.1">
    <property type="nucleotide sequence ID" value="NM_001005738.2"/>
</dbReference>
<dbReference type="RefSeq" id="NP_001453.1">
    <property type="nucleotide sequence ID" value="NM_001462.3"/>
</dbReference>
<dbReference type="RefSeq" id="XP_006723183.1">
    <property type="nucleotide sequence ID" value="XM_006723120.4"/>
</dbReference>
<dbReference type="RefSeq" id="XP_016882031.1">
    <property type="nucleotide sequence ID" value="XM_017026542.1"/>
</dbReference>
<dbReference type="RefSeq" id="XP_054176389.1">
    <property type="nucleotide sequence ID" value="XM_054320414.1"/>
</dbReference>
<dbReference type="RefSeq" id="XP_054176390.1">
    <property type="nucleotide sequence ID" value="XM_054320415.1"/>
</dbReference>
<dbReference type="PDB" id="6LW5">
    <property type="method" value="X-ray"/>
    <property type="resolution" value="2.80 A"/>
    <property type="chains" value="A=3-322"/>
</dbReference>
<dbReference type="PDB" id="6OMM">
    <property type="method" value="EM"/>
    <property type="resolution" value="3.17 A"/>
    <property type="chains" value="R=1-342"/>
</dbReference>
<dbReference type="PDB" id="7T6S">
    <property type="method" value="EM"/>
    <property type="resolution" value="3.00 A"/>
    <property type="chains" value="R=1-342"/>
</dbReference>
<dbReference type="PDB" id="7T6U">
    <property type="method" value="EM"/>
    <property type="resolution" value="2.90 A"/>
    <property type="chains" value="R=1-342"/>
</dbReference>
<dbReference type="PDB" id="7T6V">
    <property type="method" value="EM"/>
    <property type="resolution" value="3.10 A"/>
    <property type="chains" value="R=1-342"/>
</dbReference>
<dbReference type="PDB" id="7WVV">
    <property type="method" value="EM"/>
    <property type="resolution" value="2.90 A"/>
    <property type="chains" value="R=2-347"/>
</dbReference>
<dbReference type="PDB" id="7WVW">
    <property type="method" value="EM"/>
    <property type="resolution" value="3.10 A"/>
    <property type="chains" value="R=2-347"/>
</dbReference>
<dbReference type="PDB" id="7WVX">
    <property type="method" value="EM"/>
    <property type="resolution" value="2.80 A"/>
    <property type="chains" value="R=2-347"/>
</dbReference>
<dbReference type="PDB" id="7WVY">
    <property type="method" value="EM"/>
    <property type="resolution" value="3.00 A"/>
    <property type="chains" value="R=2-347"/>
</dbReference>
<dbReference type="PDB" id="8Y62">
    <property type="method" value="EM"/>
    <property type="resolution" value="3.20 A"/>
    <property type="chains" value="R=1-351"/>
</dbReference>
<dbReference type="PDB" id="8Y63">
    <property type="method" value="EM"/>
    <property type="resolution" value="3.20 A"/>
    <property type="chains" value="R=1-351"/>
</dbReference>
<dbReference type="PDBsum" id="6LW5"/>
<dbReference type="PDBsum" id="6OMM"/>
<dbReference type="PDBsum" id="7T6S"/>
<dbReference type="PDBsum" id="7T6U"/>
<dbReference type="PDBsum" id="7T6V"/>
<dbReference type="PDBsum" id="7WVV"/>
<dbReference type="PDBsum" id="7WVW"/>
<dbReference type="PDBsum" id="7WVX"/>
<dbReference type="PDBsum" id="7WVY"/>
<dbReference type="PDBsum" id="8Y62"/>
<dbReference type="PDBsum" id="8Y63"/>
<dbReference type="EMDB" id="EMD-20126"/>
<dbReference type="EMDB" id="EMD-25726"/>
<dbReference type="EMDB" id="EMD-25728"/>
<dbReference type="EMDB" id="EMD-25729"/>
<dbReference type="EMDB" id="EMD-32859"/>
<dbReference type="EMDB" id="EMD-32860"/>
<dbReference type="EMDB" id="EMD-32861"/>
<dbReference type="EMDB" id="EMD-32862"/>
<dbReference type="EMDB" id="EMD-38964"/>
<dbReference type="EMDB" id="EMD-38965"/>
<dbReference type="SMR" id="P25090"/>
<dbReference type="BioGRID" id="108641">
    <property type="interactions" value="150"/>
</dbReference>
<dbReference type="FunCoup" id="P25090">
    <property type="interactions" value="443"/>
</dbReference>
<dbReference type="IntAct" id="P25090">
    <property type="interactions" value="136"/>
</dbReference>
<dbReference type="STRING" id="9606.ENSP00000468897"/>
<dbReference type="BindingDB" id="P25090"/>
<dbReference type="ChEMBL" id="CHEMBL4227"/>
<dbReference type="GuidetoPHARMACOLOGY" id="223"/>
<dbReference type="TCDB" id="9.A.14.13.44">
    <property type="family name" value="the g-protein-coupled receptor (gpcr) family"/>
</dbReference>
<dbReference type="GlyCosmos" id="P25090">
    <property type="glycosylation" value="1 site, No reported glycans"/>
</dbReference>
<dbReference type="GlyGen" id="P25090">
    <property type="glycosylation" value="1 site"/>
</dbReference>
<dbReference type="iPTMnet" id="P25090"/>
<dbReference type="PhosphoSitePlus" id="P25090"/>
<dbReference type="BioMuta" id="FPR2"/>
<dbReference type="DMDM" id="399504"/>
<dbReference type="MassIVE" id="P25090"/>
<dbReference type="PaxDb" id="9606-ENSP00000468897"/>
<dbReference type="PeptideAtlas" id="P25090"/>
<dbReference type="ProteomicsDB" id="54252"/>
<dbReference type="TopDownProteomics" id="P25090"/>
<dbReference type="Antibodypedia" id="19050">
    <property type="antibodies" value="407 antibodies from 36 providers"/>
</dbReference>
<dbReference type="DNASU" id="2358"/>
<dbReference type="Ensembl" id="ENST00000340023.7">
    <property type="protein sequence ID" value="ENSP00000340191.4"/>
    <property type="gene ID" value="ENSG00000171049.9"/>
</dbReference>
<dbReference type="Ensembl" id="ENST00000598776.1">
    <property type="protein sequence ID" value="ENSP00000468897.1"/>
    <property type="gene ID" value="ENSG00000171049.9"/>
</dbReference>
<dbReference type="Ensembl" id="ENST00000598953.1">
    <property type="protein sequence ID" value="ENSP00000468876.1"/>
    <property type="gene ID" value="ENSG00000171049.9"/>
</dbReference>
<dbReference type="GeneID" id="2358"/>
<dbReference type="KEGG" id="hsa:2358"/>
<dbReference type="MANE-Select" id="ENST00000340023.7">
    <property type="protein sequence ID" value="ENSP00000340191.4"/>
    <property type="RefSeq nucleotide sequence ID" value="NM_001005738.2"/>
    <property type="RefSeq protein sequence ID" value="NP_001005738.1"/>
</dbReference>
<dbReference type="UCSC" id="uc002pxr.4">
    <property type="organism name" value="human"/>
</dbReference>
<dbReference type="AGR" id="HGNC:3827"/>
<dbReference type="CTD" id="2358"/>
<dbReference type="DisGeNET" id="2358"/>
<dbReference type="GeneCards" id="FPR2"/>
<dbReference type="HGNC" id="HGNC:3827">
    <property type="gene designation" value="FPR2"/>
</dbReference>
<dbReference type="HPA" id="ENSG00000171049">
    <property type="expression patterns" value="Tissue enhanced (lymphoid)"/>
</dbReference>
<dbReference type="MIM" id="136538">
    <property type="type" value="gene"/>
</dbReference>
<dbReference type="neXtProt" id="NX_P25090"/>
<dbReference type="OpenTargets" id="ENSG00000171049"/>
<dbReference type="PharmGKB" id="PA162388901"/>
<dbReference type="VEuPathDB" id="HostDB:ENSG00000171049"/>
<dbReference type="eggNOG" id="KOG3656">
    <property type="taxonomic scope" value="Eukaryota"/>
</dbReference>
<dbReference type="GeneTree" id="ENSGT01020000230438"/>
<dbReference type="HOGENOM" id="CLU_009579_8_0_1"/>
<dbReference type="InParanoid" id="P25090"/>
<dbReference type="OMA" id="NVTHCYN"/>
<dbReference type="OrthoDB" id="6088892at2759"/>
<dbReference type="PAN-GO" id="P25090">
    <property type="GO annotations" value="7 GO annotations based on evolutionary models"/>
</dbReference>
<dbReference type="PhylomeDB" id="P25090"/>
<dbReference type="TreeFam" id="TF330976"/>
<dbReference type="PathwayCommons" id="P25090"/>
<dbReference type="Reactome" id="R-HSA-416476">
    <property type="pathway name" value="G alpha (q) signalling events"/>
</dbReference>
<dbReference type="Reactome" id="R-HSA-418594">
    <property type="pathway name" value="G alpha (i) signalling events"/>
</dbReference>
<dbReference type="Reactome" id="R-HSA-444473">
    <property type="pathway name" value="Formyl peptide receptors bind formyl peptides and many other ligands"/>
</dbReference>
<dbReference type="Reactome" id="R-HSA-6798695">
    <property type="pathway name" value="Neutrophil degranulation"/>
</dbReference>
<dbReference type="SignaLink" id="P25090"/>
<dbReference type="SIGNOR" id="P25090"/>
<dbReference type="BioGRID-ORCS" id="2358">
    <property type="hits" value="12 hits in 1147 CRISPR screens"/>
</dbReference>
<dbReference type="GeneWiki" id="Formyl_peptide_receptor_2"/>
<dbReference type="GenomeRNAi" id="2358"/>
<dbReference type="Pharos" id="P25090">
    <property type="development level" value="Tchem"/>
</dbReference>
<dbReference type="PRO" id="PR:P25090"/>
<dbReference type="Proteomes" id="UP000005640">
    <property type="component" value="Chromosome 19"/>
</dbReference>
<dbReference type="RNAct" id="P25090">
    <property type="molecule type" value="protein"/>
</dbReference>
<dbReference type="Bgee" id="ENSG00000171049">
    <property type="expression patterns" value="Expressed in blood and 108 other cell types or tissues"/>
</dbReference>
<dbReference type="ExpressionAtlas" id="P25090">
    <property type="expression patterns" value="baseline and differential"/>
</dbReference>
<dbReference type="GO" id="GO:0005737">
    <property type="term" value="C:cytoplasm"/>
    <property type="evidence" value="ECO:0000314"/>
    <property type="project" value="ARUK-UCL"/>
</dbReference>
<dbReference type="GO" id="GO:0101003">
    <property type="term" value="C:ficolin-1-rich granule membrane"/>
    <property type="evidence" value="ECO:0000304"/>
    <property type="project" value="Reactome"/>
</dbReference>
<dbReference type="GO" id="GO:0016020">
    <property type="term" value="C:membrane"/>
    <property type="evidence" value="ECO:0000304"/>
    <property type="project" value="ProtInc"/>
</dbReference>
<dbReference type="GO" id="GO:0005886">
    <property type="term" value="C:plasma membrane"/>
    <property type="evidence" value="ECO:0000314"/>
    <property type="project" value="UniProtKB"/>
</dbReference>
<dbReference type="GO" id="GO:0035579">
    <property type="term" value="C:specific granule membrane"/>
    <property type="evidence" value="ECO:0000304"/>
    <property type="project" value="Reactome"/>
</dbReference>
<dbReference type="GO" id="GO:0070821">
    <property type="term" value="C:tertiary granule membrane"/>
    <property type="evidence" value="ECO:0000304"/>
    <property type="project" value="Reactome"/>
</dbReference>
<dbReference type="GO" id="GO:0001540">
    <property type="term" value="F:amyloid-beta binding"/>
    <property type="evidence" value="ECO:0000353"/>
    <property type="project" value="ARUK-UCL"/>
</dbReference>
<dbReference type="GO" id="GO:0038024">
    <property type="term" value="F:cargo receptor activity"/>
    <property type="evidence" value="ECO:0000250"/>
    <property type="project" value="ARUK-UCL"/>
</dbReference>
<dbReference type="GO" id="GO:0004875">
    <property type="term" value="F:complement receptor activity"/>
    <property type="evidence" value="ECO:0000318"/>
    <property type="project" value="GO_Central"/>
</dbReference>
<dbReference type="GO" id="GO:0004930">
    <property type="term" value="F:G protein-coupled receptor activity"/>
    <property type="evidence" value="ECO:0000304"/>
    <property type="project" value="ProtInc"/>
</dbReference>
<dbReference type="GO" id="GO:0004982">
    <property type="term" value="F:N-formyl peptide receptor activity"/>
    <property type="evidence" value="ECO:0000318"/>
    <property type="project" value="GO_Central"/>
</dbReference>
<dbReference type="GO" id="GO:0050786">
    <property type="term" value="F:RAGE receptor binding"/>
    <property type="evidence" value="ECO:0007669"/>
    <property type="project" value="Ensembl"/>
</dbReference>
<dbReference type="GO" id="GO:0005124">
    <property type="term" value="F:scavenger receptor binding"/>
    <property type="evidence" value="ECO:0000353"/>
    <property type="project" value="ARUK-UCL"/>
</dbReference>
<dbReference type="GO" id="GO:0038023">
    <property type="term" value="F:signaling receptor activity"/>
    <property type="evidence" value="ECO:0000314"/>
    <property type="project" value="ARUK-UCL"/>
</dbReference>
<dbReference type="GO" id="GO:0007193">
    <property type="term" value="P:adenylate cyclase-inhibiting G protein-coupled receptor signaling pathway"/>
    <property type="evidence" value="ECO:0000316"/>
    <property type="project" value="ARUK-UCL"/>
</dbReference>
<dbReference type="GO" id="GO:0048143">
    <property type="term" value="P:astrocyte activation"/>
    <property type="evidence" value="ECO:0000250"/>
    <property type="project" value="ARUK-UCL"/>
</dbReference>
<dbReference type="GO" id="GO:0019722">
    <property type="term" value="P:calcium-mediated signaling"/>
    <property type="evidence" value="ECO:0000316"/>
    <property type="project" value="ARUK-UCL"/>
</dbReference>
<dbReference type="GO" id="GO:0007155">
    <property type="term" value="P:cell adhesion"/>
    <property type="evidence" value="ECO:0000304"/>
    <property type="project" value="ProtInc"/>
</dbReference>
<dbReference type="GO" id="GO:0007166">
    <property type="term" value="P:cell surface receptor signaling pathway"/>
    <property type="evidence" value="ECO:0000314"/>
    <property type="project" value="ARUK-UCL"/>
</dbReference>
<dbReference type="GO" id="GO:1904646">
    <property type="term" value="P:cellular response to amyloid-beta"/>
    <property type="evidence" value="ECO:0000314"/>
    <property type="project" value="ARUK-UCL"/>
</dbReference>
<dbReference type="GO" id="GO:0006935">
    <property type="term" value="P:chemotaxis"/>
    <property type="evidence" value="ECO:0000304"/>
    <property type="project" value="ProtInc"/>
</dbReference>
<dbReference type="GO" id="GO:0002430">
    <property type="term" value="P:complement receptor mediated signaling pathway"/>
    <property type="evidence" value="ECO:0000318"/>
    <property type="project" value="GO_Central"/>
</dbReference>
<dbReference type="GO" id="GO:0042742">
    <property type="term" value="P:defense response to bacterium"/>
    <property type="evidence" value="ECO:0000314"/>
    <property type="project" value="ARUK-UCL"/>
</dbReference>
<dbReference type="GO" id="GO:0007186">
    <property type="term" value="P:G protein-coupled receptor signaling pathway"/>
    <property type="evidence" value="ECO:0000316"/>
    <property type="project" value="ARUK-UCL"/>
</dbReference>
<dbReference type="GO" id="GO:0002768">
    <property type="term" value="P:immune response-regulating cell surface receptor signaling pathway"/>
    <property type="evidence" value="ECO:0000314"/>
    <property type="project" value="ARUK-UCL"/>
</dbReference>
<dbReference type="GO" id="GO:0006954">
    <property type="term" value="P:inflammatory response"/>
    <property type="evidence" value="ECO:0000318"/>
    <property type="project" value="GO_Central"/>
</dbReference>
<dbReference type="GO" id="GO:0001774">
    <property type="term" value="P:microglial cell activation"/>
    <property type="evidence" value="ECO:0000250"/>
    <property type="project" value="ARUK-UCL"/>
</dbReference>
<dbReference type="GO" id="GO:0050728">
    <property type="term" value="P:negative regulation of inflammatory response"/>
    <property type="evidence" value="ECO:0000314"/>
    <property type="project" value="ARUK-UCL"/>
</dbReference>
<dbReference type="GO" id="GO:0043524">
    <property type="term" value="P:negative regulation of neuron apoptotic process"/>
    <property type="evidence" value="ECO:0007669"/>
    <property type="project" value="Ensembl"/>
</dbReference>
<dbReference type="GO" id="GO:0007200">
    <property type="term" value="P:phospholipase C-activating G protein-coupled receptor signaling pathway"/>
    <property type="evidence" value="ECO:0000318"/>
    <property type="project" value="GO_Central"/>
</dbReference>
<dbReference type="GO" id="GO:0050918">
    <property type="term" value="P:positive chemotaxis"/>
    <property type="evidence" value="ECO:0000250"/>
    <property type="project" value="ARUK-UCL"/>
</dbReference>
<dbReference type="GO" id="GO:0007204">
    <property type="term" value="P:positive regulation of cytosolic calcium ion concentration"/>
    <property type="evidence" value="ECO:0000318"/>
    <property type="project" value="GO_Central"/>
</dbReference>
<dbReference type="GO" id="GO:0070374">
    <property type="term" value="P:positive regulation of ERK1 and ERK2 cascade"/>
    <property type="evidence" value="ECO:0000315"/>
    <property type="project" value="ARUK-UCL"/>
</dbReference>
<dbReference type="GO" id="GO:0045089">
    <property type="term" value="P:positive regulation of innate immune response"/>
    <property type="evidence" value="ECO:0000314"/>
    <property type="project" value="ARUK-UCL"/>
</dbReference>
<dbReference type="GO" id="GO:0090026">
    <property type="term" value="P:positive regulation of monocyte chemotaxis"/>
    <property type="evidence" value="ECO:0000316"/>
    <property type="project" value="ARUK-UCL"/>
</dbReference>
<dbReference type="GO" id="GO:0050766">
    <property type="term" value="P:positive regulation of phagocytosis"/>
    <property type="evidence" value="ECO:0000314"/>
    <property type="project" value="ARUK-UCL"/>
</dbReference>
<dbReference type="GO" id="GO:0051897">
    <property type="term" value="P:positive regulation of phosphatidylinositol 3-kinase/protein kinase B signal transduction"/>
    <property type="evidence" value="ECO:0000250"/>
    <property type="project" value="ARUK-UCL"/>
</dbReference>
<dbReference type="GO" id="GO:0032930">
    <property type="term" value="P:positive regulation of superoxide anion generation"/>
    <property type="evidence" value="ECO:0000250"/>
    <property type="project" value="ARUK-UCL"/>
</dbReference>
<dbReference type="GO" id="GO:0006898">
    <property type="term" value="P:receptor-mediated endocytosis"/>
    <property type="evidence" value="ECO:0000250"/>
    <property type="project" value="ARUK-UCL"/>
</dbReference>
<dbReference type="CDD" id="cd15117">
    <property type="entry name" value="7tmA_FPR-like"/>
    <property type="match status" value="1"/>
</dbReference>
<dbReference type="FunFam" id="1.20.1070.10:FF:000034">
    <property type="entry name" value="G-protein coupled receptor 1"/>
    <property type="match status" value="1"/>
</dbReference>
<dbReference type="Gene3D" id="1.20.1070.10">
    <property type="entry name" value="Rhodopsin 7-helix transmembrane proteins"/>
    <property type="match status" value="1"/>
</dbReference>
<dbReference type="InterPro" id="IPR000826">
    <property type="entry name" value="Formyl_rcpt-rel"/>
</dbReference>
<dbReference type="InterPro" id="IPR000276">
    <property type="entry name" value="GPCR_Rhodpsn"/>
</dbReference>
<dbReference type="InterPro" id="IPR017452">
    <property type="entry name" value="GPCR_Rhodpsn_7TM"/>
</dbReference>
<dbReference type="PANTHER" id="PTHR24225">
    <property type="entry name" value="CHEMOTACTIC RECEPTOR"/>
    <property type="match status" value="1"/>
</dbReference>
<dbReference type="PANTHER" id="PTHR24225:SF0">
    <property type="entry name" value="N-FORMYL PEPTIDE RECEPTOR 2"/>
    <property type="match status" value="1"/>
</dbReference>
<dbReference type="Pfam" id="PF00001">
    <property type="entry name" value="7tm_1"/>
    <property type="match status" value="1"/>
</dbReference>
<dbReference type="PRINTS" id="PR00526">
    <property type="entry name" value="FMETLEUPHER"/>
</dbReference>
<dbReference type="PRINTS" id="PR00237">
    <property type="entry name" value="GPCRRHODOPSN"/>
</dbReference>
<dbReference type="SUPFAM" id="SSF81321">
    <property type="entry name" value="Family A G protein-coupled receptor-like"/>
    <property type="match status" value="1"/>
</dbReference>
<dbReference type="PROSITE" id="PS00237">
    <property type="entry name" value="G_PROTEIN_RECEP_F1_1"/>
    <property type="match status" value="1"/>
</dbReference>
<dbReference type="PROSITE" id="PS50262">
    <property type="entry name" value="G_PROTEIN_RECEP_F1_2"/>
    <property type="match status" value="1"/>
</dbReference>
<organism>
    <name type="scientific">Homo sapiens</name>
    <name type="common">Human</name>
    <dbReference type="NCBI Taxonomy" id="9606"/>
    <lineage>
        <taxon>Eukaryota</taxon>
        <taxon>Metazoa</taxon>
        <taxon>Chordata</taxon>
        <taxon>Craniata</taxon>
        <taxon>Vertebrata</taxon>
        <taxon>Euteleostomi</taxon>
        <taxon>Mammalia</taxon>
        <taxon>Eutheria</taxon>
        <taxon>Euarchontoglires</taxon>
        <taxon>Primates</taxon>
        <taxon>Haplorrhini</taxon>
        <taxon>Catarrhini</taxon>
        <taxon>Hominidae</taxon>
        <taxon>Homo</taxon>
    </lineage>
</organism>
<evidence type="ECO:0000250" key="1">
    <source>
        <dbReference type="UniProtKB" id="O88536"/>
    </source>
</evidence>
<evidence type="ECO:0000255" key="2"/>
<evidence type="ECO:0000255" key="3">
    <source>
        <dbReference type="PROSITE-ProRule" id="PRU00521"/>
    </source>
</evidence>
<evidence type="ECO:0000256" key="4">
    <source>
        <dbReference type="SAM" id="MobiDB-lite"/>
    </source>
</evidence>
<evidence type="ECO:0000269" key="5">
    <source>
    </source>
</evidence>
<evidence type="ECO:0000269" key="6">
    <source>
    </source>
</evidence>
<evidence type="ECO:0000269" key="7">
    <source>
    </source>
</evidence>
<evidence type="ECO:0000269" key="8">
    <source>
    </source>
</evidence>
<evidence type="ECO:0000269" key="9">
    <source>
    </source>
</evidence>
<evidence type="ECO:0000269" key="10">
    <source>
    </source>
</evidence>
<evidence type="ECO:0000305" key="11"/>
<evidence type="ECO:0007829" key="12">
    <source>
        <dbReference type="PDB" id="6LW5"/>
    </source>
</evidence>
<evidence type="ECO:0007829" key="13">
    <source>
        <dbReference type="PDB" id="7WVX"/>
    </source>
</evidence>
<feature type="chain" id="PRO_0000069451" description="N-formyl peptide receptor 2">
    <location>
        <begin position="1"/>
        <end position="351"/>
    </location>
</feature>
<feature type="topological domain" description="Extracellular" evidence="2">
    <location>
        <begin position="1"/>
        <end position="27"/>
    </location>
</feature>
<feature type="transmembrane region" description="Helical; Name=1" evidence="2">
    <location>
        <begin position="28"/>
        <end position="50"/>
    </location>
</feature>
<feature type="topological domain" description="Cytoplasmic" evidence="2">
    <location>
        <begin position="51"/>
        <end position="61"/>
    </location>
</feature>
<feature type="transmembrane region" description="Helical; Name=2" evidence="2">
    <location>
        <begin position="62"/>
        <end position="83"/>
    </location>
</feature>
<feature type="topological domain" description="Extracellular" evidence="2">
    <location>
        <begin position="84"/>
        <end position="100"/>
    </location>
</feature>
<feature type="transmembrane region" description="Helical; Name=3" evidence="2">
    <location>
        <begin position="101"/>
        <end position="121"/>
    </location>
</feature>
<feature type="topological domain" description="Cytoplasmic" evidence="2">
    <location>
        <begin position="122"/>
        <end position="140"/>
    </location>
</feature>
<feature type="transmembrane region" description="Helical; Name=4" evidence="2">
    <location>
        <begin position="141"/>
        <end position="162"/>
    </location>
</feature>
<feature type="topological domain" description="Extracellular" evidence="2">
    <location>
        <begin position="163"/>
        <end position="205"/>
    </location>
</feature>
<feature type="transmembrane region" description="Helical; Name=5" evidence="2">
    <location>
        <begin position="206"/>
        <end position="226"/>
    </location>
</feature>
<feature type="topological domain" description="Cytoplasmic" evidence="2">
    <location>
        <begin position="227"/>
        <end position="242"/>
    </location>
</feature>
<feature type="transmembrane region" description="Helical; Name=6" evidence="2">
    <location>
        <begin position="243"/>
        <end position="266"/>
    </location>
</feature>
<feature type="topological domain" description="Extracellular" evidence="2">
    <location>
        <begin position="267"/>
        <end position="286"/>
    </location>
</feature>
<feature type="transmembrane region" description="Helical; Name=7" evidence="2">
    <location>
        <begin position="287"/>
        <end position="306"/>
    </location>
</feature>
<feature type="topological domain" description="Cytoplasmic" evidence="2">
    <location>
        <begin position="307"/>
        <end position="351"/>
    </location>
</feature>
<feature type="region of interest" description="Disordered" evidence="4">
    <location>
        <begin position="325"/>
        <end position="351"/>
    </location>
</feature>
<feature type="compositionally biased region" description="Polar residues" evidence="4">
    <location>
        <begin position="329"/>
        <end position="341"/>
    </location>
</feature>
<feature type="glycosylation site" description="N-linked (GlcNAc...) asparagine" evidence="2">
    <location>
        <position position="4"/>
    </location>
</feature>
<feature type="disulfide bond" evidence="3">
    <location>
        <begin position="98"/>
        <end position="176"/>
    </location>
</feature>
<feature type="sequence conflict" description="In Ref. 1; AAA58481." evidence="11" ref="1">
    <original>S</original>
    <variation>C</variation>
    <location>
        <position position="339"/>
    </location>
</feature>
<feature type="helix" evidence="12">
    <location>
        <begin position="3"/>
        <end position="6"/>
    </location>
</feature>
<feature type="turn" evidence="12">
    <location>
        <begin position="11"/>
        <end position="13"/>
    </location>
</feature>
<feature type="helix" evidence="12">
    <location>
        <begin position="15"/>
        <end position="17"/>
    </location>
</feature>
<feature type="helix" evidence="12">
    <location>
        <begin position="20"/>
        <end position="53"/>
    </location>
</feature>
<feature type="helix" evidence="12">
    <location>
        <begin position="59"/>
        <end position="75"/>
    </location>
</feature>
<feature type="helix" evidence="12">
    <location>
        <begin position="78"/>
        <end position="86"/>
    </location>
</feature>
<feature type="strand" evidence="13">
    <location>
        <begin position="87"/>
        <end position="89"/>
    </location>
</feature>
<feature type="helix" evidence="12">
    <location>
        <begin position="95"/>
        <end position="128"/>
    </location>
</feature>
<feature type="helix" evidence="12">
    <location>
        <begin position="130"/>
        <end position="136"/>
    </location>
</feature>
<feature type="helix" evidence="12">
    <location>
        <begin position="139"/>
        <end position="145"/>
    </location>
</feature>
<feature type="helix" evidence="12">
    <location>
        <begin position="147"/>
        <end position="155"/>
    </location>
</feature>
<feature type="helix" evidence="12">
    <location>
        <begin position="158"/>
        <end position="163"/>
    </location>
</feature>
<feature type="strand" evidence="12">
    <location>
        <begin position="164"/>
        <end position="168"/>
    </location>
</feature>
<feature type="strand" evidence="12">
    <location>
        <begin position="170"/>
        <end position="172"/>
    </location>
</feature>
<feature type="strand" evidence="12">
    <location>
        <begin position="174"/>
        <end position="178"/>
    </location>
</feature>
<feature type="helix" evidence="12">
    <location>
        <begin position="180"/>
        <end position="182"/>
    </location>
</feature>
<feature type="helix" evidence="12">
    <location>
        <begin position="187"/>
        <end position="207"/>
    </location>
</feature>
<feature type="turn" evidence="12">
    <location>
        <begin position="208"/>
        <end position="210"/>
    </location>
</feature>
<feature type="helix" evidence="12">
    <location>
        <begin position="211"/>
        <end position="230"/>
    </location>
</feature>
<feature type="strand" evidence="12">
    <location>
        <begin position="233"/>
        <end position="235"/>
    </location>
</feature>
<feature type="helix" evidence="12">
    <location>
        <begin position="240"/>
        <end position="266"/>
    </location>
</feature>
<feature type="helix" evidence="12">
    <location>
        <begin position="268"/>
        <end position="273"/>
    </location>
</feature>
<feature type="helix" evidence="12">
    <location>
        <begin position="278"/>
        <end position="282"/>
    </location>
</feature>
<feature type="helix" evidence="12">
    <location>
        <begin position="284"/>
        <end position="302"/>
    </location>
</feature>
<feature type="turn" evidence="12">
    <location>
        <begin position="303"/>
        <end position="305"/>
    </location>
</feature>
<feature type="helix" evidence="12">
    <location>
        <begin position="307"/>
        <end position="316"/>
    </location>
</feature>
<feature type="strand" evidence="12">
    <location>
        <begin position="317"/>
        <end position="319"/>
    </location>
</feature>
<reference key="1">
    <citation type="journal article" date="1992" name="Genomics">
        <title>Mapping of genes for the human C5a receptor (C5AR), human FMLP receptor (FPR), and two FMLP receptor homologue orphan receptors (FPRH1, FPRH2) to chromosome 19.</title>
        <authorList>
            <person name="Bao L."/>
            <person name="Gerard N.P."/>
            <person name="Eddy R.L. Jr."/>
            <person name="Shows T.B."/>
            <person name="Gerard C."/>
        </authorList>
    </citation>
    <scope>NUCLEOTIDE SEQUENCE [MRNA]</scope>
</reference>
<reference key="2">
    <citation type="journal article" date="1992" name="Gene">
        <title>Cloning of a cDNA encoding a receptor related to the formyl peptide receptor of human neutrophils.</title>
        <authorList>
            <person name="Perez H.D."/>
            <person name="Holmes R."/>
            <person name="Kelly E."/>
            <person name="McClary J."/>
            <person name="Andrews W.H."/>
        </authorList>
    </citation>
    <scope>NUCLEOTIDE SEQUENCE [MRNA]</scope>
    <source>
        <tissue>Bone marrow</tissue>
    </source>
</reference>
<reference key="3">
    <citation type="journal article" date="1992" name="Biochem. Biophys. Res. Commun.">
        <title>Isolation of a cDNA that encodes a novel granulocyte N-formyl peptide receptor.</title>
        <authorList>
            <person name="Ye R.D."/>
            <person name="Cavanagh S.L."/>
            <person name="Quehenberger O."/>
            <person name="Prossnitz E.R."/>
            <person name="Cochrane C.G."/>
        </authorList>
    </citation>
    <scope>NUCLEOTIDE SEQUENCE [MRNA]</scope>
    <scope>FUNCTION</scope>
    <source>
        <tissue>Granulocyte</tissue>
    </source>
</reference>
<reference key="4">
    <citation type="journal article" date="1992" name="J. Biol. Chem.">
        <title>A structural homologue of the N-formyl peptide receptor. Characterization and chromosome mapping of a peptide chemoattractant receptor family.</title>
        <authorList>
            <person name="Murphy P.M."/>
            <person name="Ozcelik T."/>
            <person name="Kenney R.T."/>
            <person name="Tiffany H.L."/>
            <person name="McDermott D."/>
            <person name="Francke U."/>
        </authorList>
    </citation>
    <scope>NUCLEOTIDE SEQUENCE [MRNA]</scope>
</reference>
<reference key="5">
    <citation type="journal article" date="1993" name="Int. Immunol.">
        <title>Molecular cloning of cDNAs encoding a LD78 receptor and putative leukocyte chemotactic peptide receptors.</title>
        <authorList>
            <person name="Nomura H."/>
            <person name="Nielsen B.W."/>
            <person name="Matsushima K."/>
        </authorList>
    </citation>
    <scope>NUCLEOTIDE SEQUENCE [MRNA]</scope>
    <source>
        <tissue>Monocyte</tissue>
    </source>
</reference>
<reference key="6">
    <citation type="submission" date="1997-04" db="EMBL/GenBank/DDBJ databases">
        <authorList>
            <person name="Maddox J.F."/>
            <person name="Hachicha M."/>
            <person name="Takano T."/>
            <person name="Petasis N.A."/>
            <person name="Fokin V.V."/>
            <person name="Serhan C.N."/>
        </authorList>
    </citation>
    <scope>NUCLEOTIDE SEQUENCE [MRNA]</scope>
</reference>
<reference key="7">
    <citation type="journal article" date="1998" name="J. Exp. Med.">
        <title>Identification of a human enterocyte lipoxin A4 receptor that is regulated by interleukin (IL)-13 and interferon gamma and inhibits tumor necrosis factor alpha-induced IL-8 release.</title>
        <authorList>
            <person name="Gronert K."/>
            <person name="Gewirtz A."/>
            <person name="Madara J.L."/>
            <person name="Serhan C.N."/>
        </authorList>
    </citation>
    <scope>NUCLEOTIDE SEQUENCE [MRNA]</scope>
    <scope>FUNCTION</scope>
</reference>
<reference key="8">
    <citation type="submission" date="2003-01" db="EMBL/GenBank/DDBJ databases">
        <title>cDNA clones of human proteins involved in signal transduction sequenced by the Guthrie cDNA resource center (www.cdna.org).</title>
        <authorList>
            <person name="Kopatz S.A."/>
            <person name="Aronstam R.S."/>
            <person name="Sharma S.V."/>
        </authorList>
    </citation>
    <scope>NUCLEOTIDE SEQUENCE [LARGE SCALE MRNA]</scope>
</reference>
<reference key="9">
    <citation type="journal article" date="2004" name="Nat. Genet.">
        <title>Complete sequencing and characterization of 21,243 full-length human cDNAs.</title>
        <authorList>
            <person name="Ota T."/>
            <person name="Suzuki Y."/>
            <person name="Nishikawa T."/>
            <person name="Otsuki T."/>
            <person name="Sugiyama T."/>
            <person name="Irie R."/>
            <person name="Wakamatsu A."/>
            <person name="Hayashi K."/>
            <person name="Sato H."/>
            <person name="Nagai K."/>
            <person name="Kimura K."/>
            <person name="Makita H."/>
            <person name="Sekine M."/>
            <person name="Obayashi M."/>
            <person name="Nishi T."/>
            <person name="Shibahara T."/>
            <person name="Tanaka T."/>
            <person name="Ishii S."/>
            <person name="Yamamoto J."/>
            <person name="Saito K."/>
            <person name="Kawai Y."/>
            <person name="Isono Y."/>
            <person name="Nakamura Y."/>
            <person name="Nagahari K."/>
            <person name="Murakami K."/>
            <person name="Yasuda T."/>
            <person name="Iwayanagi T."/>
            <person name="Wagatsuma M."/>
            <person name="Shiratori A."/>
            <person name="Sudo H."/>
            <person name="Hosoiri T."/>
            <person name="Kaku Y."/>
            <person name="Kodaira H."/>
            <person name="Kondo H."/>
            <person name="Sugawara M."/>
            <person name="Takahashi M."/>
            <person name="Kanda K."/>
            <person name="Yokoi T."/>
            <person name="Furuya T."/>
            <person name="Kikkawa E."/>
            <person name="Omura Y."/>
            <person name="Abe K."/>
            <person name="Kamihara K."/>
            <person name="Katsuta N."/>
            <person name="Sato K."/>
            <person name="Tanikawa M."/>
            <person name="Yamazaki M."/>
            <person name="Ninomiya K."/>
            <person name="Ishibashi T."/>
            <person name="Yamashita H."/>
            <person name="Murakawa K."/>
            <person name="Fujimori K."/>
            <person name="Tanai H."/>
            <person name="Kimata M."/>
            <person name="Watanabe M."/>
            <person name="Hiraoka S."/>
            <person name="Chiba Y."/>
            <person name="Ishida S."/>
            <person name="Ono Y."/>
            <person name="Takiguchi S."/>
            <person name="Watanabe S."/>
            <person name="Yosida M."/>
            <person name="Hotuta T."/>
            <person name="Kusano J."/>
            <person name="Kanehori K."/>
            <person name="Takahashi-Fujii A."/>
            <person name="Hara H."/>
            <person name="Tanase T.-O."/>
            <person name="Nomura Y."/>
            <person name="Togiya S."/>
            <person name="Komai F."/>
            <person name="Hara R."/>
            <person name="Takeuchi K."/>
            <person name="Arita M."/>
            <person name="Imose N."/>
            <person name="Musashino K."/>
            <person name="Yuuki H."/>
            <person name="Oshima A."/>
            <person name="Sasaki N."/>
            <person name="Aotsuka S."/>
            <person name="Yoshikawa Y."/>
            <person name="Matsunawa H."/>
            <person name="Ichihara T."/>
            <person name="Shiohata N."/>
            <person name="Sano S."/>
            <person name="Moriya S."/>
            <person name="Momiyama H."/>
            <person name="Satoh N."/>
            <person name="Takami S."/>
            <person name="Terashima Y."/>
            <person name="Suzuki O."/>
            <person name="Nakagawa S."/>
            <person name="Senoh A."/>
            <person name="Mizoguchi H."/>
            <person name="Goto Y."/>
            <person name="Shimizu F."/>
            <person name="Wakebe H."/>
            <person name="Hishigaki H."/>
            <person name="Watanabe T."/>
            <person name="Sugiyama A."/>
            <person name="Takemoto M."/>
            <person name="Kawakami B."/>
            <person name="Yamazaki M."/>
            <person name="Watanabe K."/>
            <person name="Kumagai A."/>
            <person name="Itakura S."/>
            <person name="Fukuzumi Y."/>
            <person name="Fujimori Y."/>
            <person name="Komiyama M."/>
            <person name="Tashiro H."/>
            <person name="Tanigami A."/>
            <person name="Fujiwara T."/>
            <person name="Ono T."/>
            <person name="Yamada K."/>
            <person name="Fujii Y."/>
            <person name="Ozaki K."/>
            <person name="Hirao M."/>
            <person name="Ohmori Y."/>
            <person name="Kawabata A."/>
            <person name="Hikiji T."/>
            <person name="Kobatake N."/>
            <person name="Inagaki H."/>
            <person name="Ikema Y."/>
            <person name="Okamoto S."/>
            <person name="Okitani R."/>
            <person name="Kawakami T."/>
            <person name="Noguchi S."/>
            <person name="Itoh T."/>
            <person name="Shigeta K."/>
            <person name="Senba T."/>
            <person name="Matsumura K."/>
            <person name="Nakajima Y."/>
            <person name="Mizuno T."/>
            <person name="Morinaga M."/>
            <person name="Sasaki M."/>
            <person name="Togashi T."/>
            <person name="Oyama M."/>
            <person name="Hata H."/>
            <person name="Watanabe M."/>
            <person name="Komatsu T."/>
            <person name="Mizushima-Sugano J."/>
            <person name="Satoh T."/>
            <person name="Shirai Y."/>
            <person name="Takahashi Y."/>
            <person name="Nakagawa K."/>
            <person name="Okumura K."/>
            <person name="Nagase T."/>
            <person name="Nomura N."/>
            <person name="Kikuchi H."/>
            <person name="Masuho Y."/>
            <person name="Yamashita R."/>
            <person name="Nakai K."/>
            <person name="Yada T."/>
            <person name="Nakamura Y."/>
            <person name="Ohara O."/>
            <person name="Isogai T."/>
            <person name="Sugano S."/>
        </authorList>
    </citation>
    <scope>NUCLEOTIDE SEQUENCE [LARGE SCALE MRNA]</scope>
    <source>
        <tissue>Heart</tissue>
    </source>
</reference>
<reference key="10">
    <citation type="journal article" date="2004" name="Nature">
        <title>The DNA sequence and biology of human chromosome 19.</title>
        <authorList>
            <person name="Grimwood J."/>
            <person name="Gordon L.A."/>
            <person name="Olsen A.S."/>
            <person name="Terry A."/>
            <person name="Schmutz J."/>
            <person name="Lamerdin J.E."/>
            <person name="Hellsten U."/>
            <person name="Goodstein D."/>
            <person name="Couronne O."/>
            <person name="Tran-Gyamfi M."/>
            <person name="Aerts A."/>
            <person name="Altherr M."/>
            <person name="Ashworth L."/>
            <person name="Bajorek E."/>
            <person name="Black S."/>
            <person name="Branscomb E."/>
            <person name="Caenepeel S."/>
            <person name="Carrano A.V."/>
            <person name="Caoile C."/>
            <person name="Chan Y.M."/>
            <person name="Christensen M."/>
            <person name="Cleland C.A."/>
            <person name="Copeland A."/>
            <person name="Dalin E."/>
            <person name="Dehal P."/>
            <person name="Denys M."/>
            <person name="Detter J.C."/>
            <person name="Escobar J."/>
            <person name="Flowers D."/>
            <person name="Fotopulos D."/>
            <person name="Garcia C."/>
            <person name="Georgescu A.M."/>
            <person name="Glavina T."/>
            <person name="Gomez M."/>
            <person name="Gonzales E."/>
            <person name="Groza M."/>
            <person name="Hammon N."/>
            <person name="Hawkins T."/>
            <person name="Haydu L."/>
            <person name="Ho I."/>
            <person name="Huang W."/>
            <person name="Israni S."/>
            <person name="Jett J."/>
            <person name="Kadner K."/>
            <person name="Kimball H."/>
            <person name="Kobayashi A."/>
            <person name="Larionov V."/>
            <person name="Leem S.-H."/>
            <person name="Lopez F."/>
            <person name="Lou Y."/>
            <person name="Lowry S."/>
            <person name="Malfatti S."/>
            <person name="Martinez D."/>
            <person name="McCready P.M."/>
            <person name="Medina C."/>
            <person name="Morgan J."/>
            <person name="Nelson K."/>
            <person name="Nolan M."/>
            <person name="Ovcharenko I."/>
            <person name="Pitluck S."/>
            <person name="Pollard M."/>
            <person name="Popkie A.P."/>
            <person name="Predki P."/>
            <person name="Quan G."/>
            <person name="Ramirez L."/>
            <person name="Rash S."/>
            <person name="Retterer J."/>
            <person name="Rodriguez A."/>
            <person name="Rogers S."/>
            <person name="Salamov A."/>
            <person name="Salazar A."/>
            <person name="She X."/>
            <person name="Smith D."/>
            <person name="Slezak T."/>
            <person name="Solovyev V."/>
            <person name="Thayer N."/>
            <person name="Tice H."/>
            <person name="Tsai M."/>
            <person name="Ustaszewska A."/>
            <person name="Vo N."/>
            <person name="Wagner M."/>
            <person name="Wheeler J."/>
            <person name="Wu K."/>
            <person name="Xie G."/>
            <person name="Yang J."/>
            <person name="Dubchak I."/>
            <person name="Furey T.S."/>
            <person name="DeJong P."/>
            <person name="Dickson M."/>
            <person name="Gordon D."/>
            <person name="Eichler E.E."/>
            <person name="Pennacchio L.A."/>
            <person name="Richardson P."/>
            <person name="Stubbs L."/>
            <person name="Rokhsar D.S."/>
            <person name="Myers R.M."/>
            <person name="Rubin E.M."/>
            <person name="Lucas S.M."/>
        </authorList>
    </citation>
    <scope>NUCLEOTIDE SEQUENCE [LARGE SCALE GENOMIC DNA]</scope>
</reference>
<reference key="11">
    <citation type="submission" date="2005-07" db="EMBL/GenBank/DDBJ databases">
        <authorList>
            <person name="Mural R.J."/>
            <person name="Istrail S."/>
            <person name="Sutton G.G."/>
            <person name="Florea L."/>
            <person name="Halpern A.L."/>
            <person name="Mobarry C.M."/>
            <person name="Lippert R."/>
            <person name="Walenz B."/>
            <person name="Shatkay H."/>
            <person name="Dew I."/>
            <person name="Miller J.R."/>
            <person name="Flanigan M.J."/>
            <person name="Edwards N.J."/>
            <person name="Bolanos R."/>
            <person name="Fasulo D."/>
            <person name="Halldorsson B.V."/>
            <person name="Hannenhalli S."/>
            <person name="Turner R."/>
            <person name="Yooseph S."/>
            <person name="Lu F."/>
            <person name="Nusskern D.R."/>
            <person name="Shue B.C."/>
            <person name="Zheng X.H."/>
            <person name="Zhong F."/>
            <person name="Delcher A.L."/>
            <person name="Huson D.H."/>
            <person name="Kravitz S.A."/>
            <person name="Mouchard L."/>
            <person name="Reinert K."/>
            <person name="Remington K.A."/>
            <person name="Clark A.G."/>
            <person name="Waterman M.S."/>
            <person name="Eichler E.E."/>
            <person name="Adams M.D."/>
            <person name="Hunkapiller M.W."/>
            <person name="Myers E.W."/>
            <person name="Venter J.C."/>
        </authorList>
    </citation>
    <scope>NUCLEOTIDE SEQUENCE [LARGE SCALE GENOMIC DNA]</scope>
</reference>
<reference key="12">
    <citation type="journal article" date="2004" name="Genome Res.">
        <title>The status, quality, and expansion of the NIH full-length cDNA project: the Mammalian Gene Collection (MGC).</title>
        <authorList>
            <consortium name="The MGC Project Team"/>
        </authorList>
    </citation>
    <scope>NUCLEOTIDE SEQUENCE [LARGE SCALE MRNA]</scope>
    <source>
        <tissue>Blood</tissue>
    </source>
</reference>
<reference key="13">
    <citation type="journal article" date="1997" name="J. Exp. Med.">
        <title>Aspirin-triggered 15-epi-lipoxin A4 (LXA4) and LXA4 stable analogues are potent inhibitors of acute inflammation: evidence for anti-inflammatory receptors.</title>
        <authorList>
            <person name="Takano T."/>
            <person name="Fiore S."/>
            <person name="Maddox J.F."/>
            <person name="Brady H.R."/>
            <person name="Petasis N.A."/>
            <person name="Serhan C.N."/>
        </authorList>
    </citation>
    <scope>TISSUE SPECIFICITY</scope>
</reference>
<reference key="14">
    <citation type="journal article" date="2001" name="FASEB J.">
        <title>Beta amyloid peptide (Abeta42) is internalized via the G-protein-coupled receptor FPRL1 and forms fibrillar aggregates in macrophages.</title>
        <authorList>
            <person name="Yazawa H."/>
            <person name="Yu Z.-X."/>
            <person name="Takeda K."/>
            <person name="Le Y."/>
            <person name="Gong W."/>
            <person name="Ferrans V.J."/>
            <person name="Oppenheim J.J."/>
            <person name="Li C.C.H."/>
            <person name="Wang J.M."/>
        </authorList>
    </citation>
    <scope>INTERACTION WITH AMYLOID-BETA PROTEIN 42</scope>
    <scope>SUBCELLULAR LOCATION</scope>
</reference>
<reference key="15">
    <citation type="journal article" date="2004" name="Biochem. Biophys. Res. Commun.">
        <title>N-Formylated humanin activates both formyl peptide receptor-like 1 and 2.</title>
        <authorList>
            <person name="Harada M."/>
            <person name="Habata Y."/>
            <person name="Hosoya M."/>
            <person name="Nishi K."/>
            <person name="Fujii R."/>
            <person name="Kobayashi M."/>
            <person name="Hinuma S."/>
        </authorList>
    </citation>
    <scope>FUNCTION</scope>
    <scope>SUBCELLULAR LOCATION</scope>
    <scope>TISSUE SPECIFICITY</scope>
</reference>
<reference key="16">
    <citation type="journal article" date="2018" name="Cell. Microbiol.">
        <title>Staphylococcal superantigen-like protein 13 activates neutrophils via formyl peptide receptor 2.</title>
        <authorList>
            <person name="Zhao Y."/>
            <person name="van Kessel K.P.M."/>
            <person name="de Haas C.J.C."/>
            <person name="Rogers M.R.C."/>
            <person name="van Strijp J.A.G."/>
            <person name="Haas P.A."/>
        </authorList>
    </citation>
    <scope>INTERACTION WITH STAPHYLOCOCCUS AUREUS PROTEIN SSL13 (MICROBIAL INFECTION)</scope>
</reference>